<dbReference type="EC" id="3.1.1.29" evidence="1"/>
<dbReference type="EMBL" id="CU928162">
    <property type="protein sequence ID" value="CAR07552.1"/>
    <property type="molecule type" value="Genomic_DNA"/>
</dbReference>
<dbReference type="RefSeq" id="WP_000152933.1">
    <property type="nucleotide sequence ID" value="NC_011745.1"/>
</dbReference>
<dbReference type="SMR" id="B7MTY8"/>
<dbReference type="GeneID" id="93775269"/>
<dbReference type="KEGG" id="ecq:ECED1_1352"/>
<dbReference type="HOGENOM" id="CLU_062456_3_1_6"/>
<dbReference type="Proteomes" id="UP000000748">
    <property type="component" value="Chromosome"/>
</dbReference>
<dbReference type="GO" id="GO:0005737">
    <property type="term" value="C:cytoplasm"/>
    <property type="evidence" value="ECO:0007669"/>
    <property type="project" value="UniProtKB-SubCell"/>
</dbReference>
<dbReference type="GO" id="GO:0004045">
    <property type="term" value="F:peptidyl-tRNA hydrolase activity"/>
    <property type="evidence" value="ECO:0007669"/>
    <property type="project" value="UniProtKB-UniRule"/>
</dbReference>
<dbReference type="GO" id="GO:0000049">
    <property type="term" value="F:tRNA binding"/>
    <property type="evidence" value="ECO:0007669"/>
    <property type="project" value="UniProtKB-UniRule"/>
</dbReference>
<dbReference type="GO" id="GO:0006515">
    <property type="term" value="P:protein quality control for misfolded or incompletely synthesized proteins"/>
    <property type="evidence" value="ECO:0007669"/>
    <property type="project" value="UniProtKB-UniRule"/>
</dbReference>
<dbReference type="GO" id="GO:0072344">
    <property type="term" value="P:rescue of stalled ribosome"/>
    <property type="evidence" value="ECO:0007669"/>
    <property type="project" value="UniProtKB-UniRule"/>
</dbReference>
<dbReference type="CDD" id="cd00462">
    <property type="entry name" value="PTH"/>
    <property type="match status" value="1"/>
</dbReference>
<dbReference type="FunFam" id="3.40.50.1470:FF:000001">
    <property type="entry name" value="Peptidyl-tRNA hydrolase"/>
    <property type="match status" value="1"/>
</dbReference>
<dbReference type="Gene3D" id="3.40.50.1470">
    <property type="entry name" value="Peptidyl-tRNA hydrolase"/>
    <property type="match status" value="1"/>
</dbReference>
<dbReference type="HAMAP" id="MF_00083">
    <property type="entry name" value="Pept_tRNA_hydro_bact"/>
    <property type="match status" value="1"/>
</dbReference>
<dbReference type="InterPro" id="IPR001328">
    <property type="entry name" value="Pept_tRNA_hydro"/>
</dbReference>
<dbReference type="InterPro" id="IPR018171">
    <property type="entry name" value="Pept_tRNA_hydro_CS"/>
</dbReference>
<dbReference type="InterPro" id="IPR036416">
    <property type="entry name" value="Pept_tRNA_hydro_sf"/>
</dbReference>
<dbReference type="NCBIfam" id="TIGR00447">
    <property type="entry name" value="pth"/>
    <property type="match status" value="1"/>
</dbReference>
<dbReference type="PANTHER" id="PTHR17224">
    <property type="entry name" value="PEPTIDYL-TRNA HYDROLASE"/>
    <property type="match status" value="1"/>
</dbReference>
<dbReference type="PANTHER" id="PTHR17224:SF1">
    <property type="entry name" value="PEPTIDYL-TRNA HYDROLASE"/>
    <property type="match status" value="1"/>
</dbReference>
<dbReference type="Pfam" id="PF01195">
    <property type="entry name" value="Pept_tRNA_hydro"/>
    <property type="match status" value="1"/>
</dbReference>
<dbReference type="SUPFAM" id="SSF53178">
    <property type="entry name" value="Peptidyl-tRNA hydrolase-like"/>
    <property type="match status" value="1"/>
</dbReference>
<dbReference type="PROSITE" id="PS01195">
    <property type="entry name" value="PEPT_TRNA_HYDROL_1"/>
    <property type="match status" value="1"/>
</dbReference>
<dbReference type="PROSITE" id="PS01196">
    <property type="entry name" value="PEPT_TRNA_HYDROL_2"/>
    <property type="match status" value="1"/>
</dbReference>
<evidence type="ECO:0000255" key="1">
    <source>
        <dbReference type="HAMAP-Rule" id="MF_00083"/>
    </source>
</evidence>
<protein>
    <recommendedName>
        <fullName evidence="1">Peptidyl-tRNA hydrolase</fullName>
        <shortName evidence="1">Pth</shortName>
        <ecNumber evidence="1">3.1.1.29</ecNumber>
    </recommendedName>
</protein>
<gene>
    <name evidence="1" type="primary">pth</name>
    <name type="ordered locus">ECED1_1352</name>
</gene>
<accession>B7MTY8</accession>
<name>PTH_ECO81</name>
<feature type="chain" id="PRO_1000118391" description="Peptidyl-tRNA hydrolase">
    <location>
        <begin position="1"/>
        <end position="194"/>
    </location>
</feature>
<feature type="active site" description="Proton acceptor" evidence="1">
    <location>
        <position position="21"/>
    </location>
</feature>
<feature type="binding site" evidence="1">
    <location>
        <position position="16"/>
    </location>
    <ligand>
        <name>tRNA</name>
        <dbReference type="ChEBI" id="CHEBI:17843"/>
    </ligand>
</feature>
<feature type="binding site" evidence="1">
    <location>
        <position position="67"/>
    </location>
    <ligand>
        <name>tRNA</name>
        <dbReference type="ChEBI" id="CHEBI:17843"/>
    </ligand>
</feature>
<feature type="binding site" evidence="1">
    <location>
        <position position="69"/>
    </location>
    <ligand>
        <name>tRNA</name>
        <dbReference type="ChEBI" id="CHEBI:17843"/>
    </ligand>
</feature>
<feature type="binding site" evidence="1">
    <location>
        <position position="115"/>
    </location>
    <ligand>
        <name>tRNA</name>
        <dbReference type="ChEBI" id="CHEBI:17843"/>
    </ligand>
</feature>
<feature type="site" description="Discriminates between blocked and unblocked aminoacyl-tRNA" evidence="1">
    <location>
        <position position="11"/>
    </location>
</feature>
<feature type="site" description="Stabilizes the basic form of H active site to accept a proton" evidence="1">
    <location>
        <position position="94"/>
    </location>
</feature>
<organism>
    <name type="scientific">Escherichia coli O81 (strain ED1a)</name>
    <dbReference type="NCBI Taxonomy" id="585397"/>
    <lineage>
        <taxon>Bacteria</taxon>
        <taxon>Pseudomonadati</taxon>
        <taxon>Pseudomonadota</taxon>
        <taxon>Gammaproteobacteria</taxon>
        <taxon>Enterobacterales</taxon>
        <taxon>Enterobacteriaceae</taxon>
        <taxon>Escherichia</taxon>
    </lineage>
</organism>
<sequence>MTIKLIVGLANPGAEYAATRHNAGAWFVDLLAERLRAPLREEAKFFGYTSRVTLGGEDVRLLVPTTFMNLSGKAVAAMASFFRINPDEILVAHDELDLPPGVAKFKLGGGHGGHNGLKDIISKLGNNPNFHRLRIGIGHPGDKNKVVGFVLGKPPVSEQKLIDEAIDEAARCTEMWFTDGLTKATNRLHAFKAQ</sequence>
<keyword id="KW-0963">Cytoplasm</keyword>
<keyword id="KW-0378">Hydrolase</keyword>
<keyword id="KW-0694">RNA-binding</keyword>
<keyword id="KW-0820">tRNA-binding</keyword>
<proteinExistence type="inferred from homology"/>
<reference key="1">
    <citation type="journal article" date="2009" name="PLoS Genet.">
        <title>Organised genome dynamics in the Escherichia coli species results in highly diverse adaptive paths.</title>
        <authorList>
            <person name="Touchon M."/>
            <person name="Hoede C."/>
            <person name="Tenaillon O."/>
            <person name="Barbe V."/>
            <person name="Baeriswyl S."/>
            <person name="Bidet P."/>
            <person name="Bingen E."/>
            <person name="Bonacorsi S."/>
            <person name="Bouchier C."/>
            <person name="Bouvet O."/>
            <person name="Calteau A."/>
            <person name="Chiapello H."/>
            <person name="Clermont O."/>
            <person name="Cruveiller S."/>
            <person name="Danchin A."/>
            <person name="Diard M."/>
            <person name="Dossat C."/>
            <person name="Karoui M.E."/>
            <person name="Frapy E."/>
            <person name="Garry L."/>
            <person name="Ghigo J.M."/>
            <person name="Gilles A.M."/>
            <person name="Johnson J."/>
            <person name="Le Bouguenec C."/>
            <person name="Lescat M."/>
            <person name="Mangenot S."/>
            <person name="Martinez-Jehanne V."/>
            <person name="Matic I."/>
            <person name="Nassif X."/>
            <person name="Oztas S."/>
            <person name="Petit M.A."/>
            <person name="Pichon C."/>
            <person name="Rouy Z."/>
            <person name="Ruf C.S."/>
            <person name="Schneider D."/>
            <person name="Tourret J."/>
            <person name="Vacherie B."/>
            <person name="Vallenet D."/>
            <person name="Medigue C."/>
            <person name="Rocha E.P.C."/>
            <person name="Denamur E."/>
        </authorList>
    </citation>
    <scope>NUCLEOTIDE SEQUENCE [LARGE SCALE GENOMIC DNA]</scope>
    <source>
        <strain>ED1a</strain>
    </source>
</reference>
<comment type="function">
    <text evidence="1">Hydrolyzes ribosome-free peptidyl-tRNAs (with 1 or more amino acids incorporated), which drop off the ribosome during protein synthesis, or as a result of ribosome stalling.</text>
</comment>
<comment type="function">
    <text evidence="1">Catalyzes the release of premature peptidyl moieties from peptidyl-tRNA molecules trapped in stalled 50S ribosomal subunits, and thus maintains levels of free tRNAs and 50S ribosomes.</text>
</comment>
<comment type="catalytic activity">
    <reaction evidence="1">
        <text>an N-acyl-L-alpha-aminoacyl-tRNA + H2O = an N-acyl-L-amino acid + a tRNA + H(+)</text>
        <dbReference type="Rhea" id="RHEA:54448"/>
        <dbReference type="Rhea" id="RHEA-COMP:10123"/>
        <dbReference type="Rhea" id="RHEA-COMP:13883"/>
        <dbReference type="ChEBI" id="CHEBI:15377"/>
        <dbReference type="ChEBI" id="CHEBI:15378"/>
        <dbReference type="ChEBI" id="CHEBI:59874"/>
        <dbReference type="ChEBI" id="CHEBI:78442"/>
        <dbReference type="ChEBI" id="CHEBI:138191"/>
        <dbReference type="EC" id="3.1.1.29"/>
    </reaction>
</comment>
<comment type="subunit">
    <text evidence="1">Monomer.</text>
</comment>
<comment type="subcellular location">
    <subcellularLocation>
        <location evidence="1">Cytoplasm</location>
    </subcellularLocation>
</comment>
<comment type="similarity">
    <text evidence="1">Belongs to the PTH family.</text>
</comment>